<feature type="chain" id="PRO_0000053611" description="Steroid receptor seven-up, isoform A">
    <location>
        <begin position="1"/>
        <end position="746"/>
    </location>
</feature>
<feature type="domain" description="NR LBD" evidence="2">
    <location>
        <begin position="307"/>
        <end position="556"/>
    </location>
</feature>
<feature type="DNA-binding region" description="Nuclear receptor" evidence="1">
    <location>
        <begin position="197"/>
        <end position="272"/>
    </location>
</feature>
<feature type="zinc finger region" description="NR C4-type" evidence="1">
    <location>
        <begin position="200"/>
        <end position="220"/>
    </location>
</feature>
<feature type="zinc finger region" description="NR C4-type" evidence="1">
    <location>
        <begin position="236"/>
        <end position="260"/>
    </location>
</feature>
<feature type="region of interest" description="Disordered" evidence="3">
    <location>
        <begin position="38"/>
        <end position="191"/>
    </location>
</feature>
<feature type="region of interest" description="Disordered" evidence="3">
    <location>
        <begin position="579"/>
        <end position="645"/>
    </location>
</feature>
<feature type="compositionally biased region" description="Low complexity" evidence="3">
    <location>
        <begin position="56"/>
        <end position="68"/>
    </location>
</feature>
<feature type="compositionally biased region" description="Polar residues" evidence="3">
    <location>
        <begin position="83"/>
        <end position="101"/>
    </location>
</feature>
<feature type="compositionally biased region" description="Gly residues" evidence="3">
    <location>
        <begin position="122"/>
        <end position="141"/>
    </location>
</feature>
<feature type="compositionally biased region" description="Polar residues" evidence="3">
    <location>
        <begin position="158"/>
        <end position="170"/>
    </location>
</feature>
<feature type="compositionally biased region" description="Low complexity" evidence="3">
    <location>
        <begin position="171"/>
        <end position="191"/>
    </location>
</feature>
<feature type="compositionally biased region" description="Polar residues" evidence="3">
    <location>
        <begin position="592"/>
        <end position="605"/>
    </location>
</feature>
<feature type="compositionally biased region" description="Low complexity" evidence="3">
    <location>
        <begin position="606"/>
        <end position="645"/>
    </location>
</feature>
<feature type="sequence conflict" description="In Ref. 1; AAA03014." evidence="6" ref="1">
    <original>A</original>
    <variation>S</variation>
    <location>
        <position position="546"/>
    </location>
</feature>
<name>7UP2_DROME</name>
<keyword id="KW-0025">Alternative splicing</keyword>
<keyword id="KW-0238">DNA-binding</keyword>
<keyword id="KW-0479">Metal-binding</keyword>
<keyword id="KW-0539">Nucleus</keyword>
<keyword id="KW-0675">Receptor</keyword>
<keyword id="KW-1185">Reference proteome</keyword>
<keyword id="KW-0716">Sensory transduction</keyword>
<keyword id="KW-0804">Transcription</keyword>
<keyword id="KW-0805">Transcription regulation</keyword>
<keyword id="KW-0844">Vision</keyword>
<keyword id="KW-0862">Zinc</keyword>
<keyword id="KW-0863">Zinc-finger</keyword>
<organism>
    <name type="scientific">Drosophila melanogaster</name>
    <name type="common">Fruit fly</name>
    <dbReference type="NCBI Taxonomy" id="7227"/>
    <lineage>
        <taxon>Eukaryota</taxon>
        <taxon>Metazoa</taxon>
        <taxon>Ecdysozoa</taxon>
        <taxon>Arthropoda</taxon>
        <taxon>Hexapoda</taxon>
        <taxon>Insecta</taxon>
        <taxon>Pterygota</taxon>
        <taxon>Neoptera</taxon>
        <taxon>Endopterygota</taxon>
        <taxon>Diptera</taxon>
        <taxon>Brachycera</taxon>
        <taxon>Muscomorpha</taxon>
        <taxon>Ephydroidea</taxon>
        <taxon>Drosophilidae</taxon>
        <taxon>Drosophila</taxon>
        <taxon>Sophophora</taxon>
    </lineage>
</organism>
<dbReference type="EMBL" id="M28864">
    <property type="protein sequence ID" value="AAA03014.1"/>
    <property type="molecule type" value="mRNA"/>
</dbReference>
<dbReference type="EMBL" id="AE014297">
    <property type="protein sequence ID" value="AAN13541.1"/>
    <property type="molecule type" value="Genomic_DNA"/>
</dbReference>
<dbReference type="PIR" id="B32693">
    <property type="entry name" value="B32693"/>
</dbReference>
<dbReference type="RefSeq" id="NP_731681.1">
    <molecule id="P16376-1"/>
    <property type="nucleotide sequence ID" value="NM_169458.1"/>
</dbReference>
<dbReference type="SMR" id="P16376"/>
<dbReference type="BioGRID" id="66603">
    <property type="interactions" value="76"/>
</dbReference>
<dbReference type="FunCoup" id="P16376">
    <property type="interactions" value="26"/>
</dbReference>
<dbReference type="STRING" id="7227.FBpp0082035"/>
<dbReference type="GlyGen" id="P16376">
    <property type="glycosylation" value="1 site"/>
</dbReference>
<dbReference type="PaxDb" id="7227-FBpp0082035"/>
<dbReference type="DNASU" id="41491"/>
<dbReference type="EnsemblMetazoa" id="FBtr0082563">
    <molecule id="P16376-1"/>
    <property type="protein sequence ID" value="FBpp0082035"/>
    <property type="gene ID" value="FBgn0003651"/>
</dbReference>
<dbReference type="GeneID" id="41491"/>
<dbReference type="AGR" id="FB:FBgn0003651"/>
<dbReference type="CTD" id="41491"/>
<dbReference type="FlyBase" id="FBgn0003651">
    <property type="gene designation" value="svp"/>
</dbReference>
<dbReference type="VEuPathDB" id="VectorBase:FBgn0003651"/>
<dbReference type="eggNOG" id="KOG3575">
    <property type="taxonomic scope" value="Eukaryota"/>
</dbReference>
<dbReference type="HOGENOM" id="CLU_007368_8_0_1"/>
<dbReference type="InParanoid" id="P16376"/>
<dbReference type="OrthoDB" id="5873264at2759"/>
<dbReference type="PhylomeDB" id="P16376"/>
<dbReference type="Reactome" id="R-DME-383280">
    <property type="pathway name" value="Nuclear Receptor transcription pathway"/>
</dbReference>
<dbReference type="BioGRID-ORCS" id="41491">
    <property type="hits" value="0 hits in 3 CRISPR screens"/>
</dbReference>
<dbReference type="GenomeRNAi" id="41491"/>
<dbReference type="Proteomes" id="UP000000803">
    <property type="component" value="Chromosome 3R"/>
</dbReference>
<dbReference type="Bgee" id="FBgn0003651">
    <property type="expression patterns" value="Expressed in lamina monopolar neuron L1 (Drosophila) in insect head and 138 other cell types or tissues"/>
</dbReference>
<dbReference type="ExpressionAtlas" id="P16376">
    <property type="expression patterns" value="baseline and differential"/>
</dbReference>
<dbReference type="GO" id="GO:0005737">
    <property type="term" value="C:cytoplasm"/>
    <property type="evidence" value="ECO:0000314"/>
    <property type="project" value="FlyBase"/>
</dbReference>
<dbReference type="GO" id="GO:0005634">
    <property type="term" value="C:nucleus"/>
    <property type="evidence" value="ECO:0007669"/>
    <property type="project" value="UniProtKB-SubCell"/>
</dbReference>
<dbReference type="GO" id="GO:0045202">
    <property type="term" value="C:synapse"/>
    <property type="evidence" value="ECO:0007669"/>
    <property type="project" value="GOC"/>
</dbReference>
<dbReference type="GO" id="GO:0001227">
    <property type="term" value="F:DNA-binding transcription repressor activity, RNA polymerase II-specific"/>
    <property type="evidence" value="ECO:0000314"/>
    <property type="project" value="FlyBase"/>
</dbReference>
<dbReference type="GO" id="GO:0004879">
    <property type="term" value="F:nuclear receptor activity"/>
    <property type="evidence" value="ECO:0000318"/>
    <property type="project" value="GO_Central"/>
</dbReference>
<dbReference type="GO" id="GO:0046982">
    <property type="term" value="F:protein heterodimerization activity"/>
    <property type="evidence" value="ECO:0000353"/>
    <property type="project" value="FlyBase"/>
</dbReference>
<dbReference type="GO" id="GO:0042803">
    <property type="term" value="F:protein homodimerization activity"/>
    <property type="evidence" value="ECO:0000353"/>
    <property type="project" value="FlyBase"/>
</dbReference>
<dbReference type="GO" id="GO:0000978">
    <property type="term" value="F:RNA polymerase II cis-regulatory region sequence-specific DNA binding"/>
    <property type="evidence" value="ECO:0000318"/>
    <property type="project" value="GO_Central"/>
</dbReference>
<dbReference type="GO" id="GO:0008270">
    <property type="term" value="F:zinc ion binding"/>
    <property type="evidence" value="ECO:0007669"/>
    <property type="project" value="UniProtKB-KW"/>
</dbReference>
<dbReference type="GO" id="GO:0007510">
    <property type="term" value="P:cardioblast cell fate determination"/>
    <property type="evidence" value="ECO:0000316"/>
    <property type="project" value="FlyBase"/>
</dbReference>
<dbReference type="GO" id="GO:0030154">
    <property type="term" value="P:cell differentiation"/>
    <property type="evidence" value="ECO:0000318"/>
    <property type="project" value="GO_Central"/>
</dbReference>
<dbReference type="GO" id="GO:0061331">
    <property type="term" value="P:epithelial cell proliferation involved in Malpighian tubule morphogenesis"/>
    <property type="evidence" value="ECO:0000315"/>
    <property type="project" value="FlyBase"/>
</dbReference>
<dbReference type="GO" id="GO:0007503">
    <property type="term" value="P:fat body development"/>
    <property type="evidence" value="ECO:0000304"/>
    <property type="project" value="FlyBase"/>
</dbReference>
<dbReference type="GO" id="GO:0021782">
    <property type="term" value="P:glial cell development"/>
    <property type="evidence" value="ECO:0000315"/>
    <property type="project" value="FlyBase"/>
</dbReference>
<dbReference type="GO" id="GO:0042593">
    <property type="term" value="P:glucose homeostasis"/>
    <property type="evidence" value="ECO:0000315"/>
    <property type="project" value="FlyBase"/>
</dbReference>
<dbReference type="GO" id="GO:0007507">
    <property type="term" value="P:heart development"/>
    <property type="evidence" value="ECO:0000304"/>
    <property type="project" value="FlyBase"/>
</dbReference>
<dbReference type="GO" id="GO:0055088">
    <property type="term" value="P:lipid homeostasis"/>
    <property type="evidence" value="ECO:0000315"/>
    <property type="project" value="FlyBase"/>
</dbReference>
<dbReference type="GO" id="GO:0007399">
    <property type="term" value="P:nervous system development"/>
    <property type="evidence" value="ECO:0000318"/>
    <property type="project" value="GO_Central"/>
</dbReference>
<dbReference type="GO" id="GO:0014019">
    <property type="term" value="P:neuroblast development"/>
    <property type="evidence" value="ECO:0000315"/>
    <property type="project" value="FlyBase"/>
</dbReference>
<dbReference type="GO" id="GO:0007270">
    <property type="term" value="P:neuron-neuron synaptic transmission"/>
    <property type="evidence" value="ECO:0000315"/>
    <property type="project" value="FlyBase"/>
</dbReference>
<dbReference type="GO" id="GO:0046530">
    <property type="term" value="P:photoreceptor cell differentiation"/>
    <property type="evidence" value="ECO:0000315"/>
    <property type="project" value="FlyBase"/>
</dbReference>
<dbReference type="GO" id="GO:0042331">
    <property type="term" value="P:phototaxis"/>
    <property type="evidence" value="ECO:0000315"/>
    <property type="project" value="FlyBase"/>
</dbReference>
<dbReference type="GO" id="GO:0007462">
    <property type="term" value="P:R1/R6 cell fate commitment"/>
    <property type="evidence" value="ECO:0000304"/>
    <property type="project" value="FlyBase"/>
</dbReference>
<dbReference type="GO" id="GO:0007464">
    <property type="term" value="P:R3/R4 cell fate commitment"/>
    <property type="evidence" value="ECO:0000304"/>
    <property type="project" value="FlyBase"/>
</dbReference>
<dbReference type="GO" id="GO:0010883">
    <property type="term" value="P:regulation of lipid storage"/>
    <property type="evidence" value="ECO:0000315"/>
    <property type="project" value="FlyBase"/>
</dbReference>
<dbReference type="GO" id="GO:0006357">
    <property type="term" value="P:regulation of transcription by RNA polymerase II"/>
    <property type="evidence" value="ECO:0000318"/>
    <property type="project" value="GO_Central"/>
</dbReference>
<dbReference type="GO" id="GO:0007419">
    <property type="term" value="P:ventral cord development"/>
    <property type="evidence" value="ECO:0007001"/>
    <property type="project" value="FlyBase"/>
</dbReference>
<dbReference type="GO" id="GO:0007601">
    <property type="term" value="P:visual perception"/>
    <property type="evidence" value="ECO:0007669"/>
    <property type="project" value="UniProtKB-KW"/>
</dbReference>
<dbReference type="CDD" id="cd06958">
    <property type="entry name" value="NR_DBD_COUP_TF"/>
    <property type="match status" value="1"/>
</dbReference>
<dbReference type="FunFam" id="3.30.50.10:FF:000016">
    <property type="entry name" value="Nuclear receptor subfamily 2 group F member 1"/>
    <property type="match status" value="1"/>
</dbReference>
<dbReference type="FunFam" id="1.10.565.10:FF:000071">
    <property type="entry name" value="Steroid receptor seven-up, isoform A"/>
    <property type="match status" value="1"/>
</dbReference>
<dbReference type="Gene3D" id="3.30.50.10">
    <property type="entry name" value="Erythroid Transcription Factor GATA-1, subunit A"/>
    <property type="match status" value="1"/>
</dbReference>
<dbReference type="Gene3D" id="1.10.565.10">
    <property type="entry name" value="Retinoid X Receptor"/>
    <property type="match status" value="1"/>
</dbReference>
<dbReference type="InterPro" id="IPR035500">
    <property type="entry name" value="NHR-like_dom_sf"/>
</dbReference>
<dbReference type="InterPro" id="IPR000536">
    <property type="entry name" value="Nucl_hrmn_rcpt_lig-bd"/>
</dbReference>
<dbReference type="InterPro" id="IPR050274">
    <property type="entry name" value="Nuclear_hormone_rcpt_NR2"/>
</dbReference>
<dbReference type="InterPro" id="IPR001723">
    <property type="entry name" value="Nuclear_hrmn_rcpt"/>
</dbReference>
<dbReference type="InterPro" id="IPR001628">
    <property type="entry name" value="Znf_hrmn_rcpt"/>
</dbReference>
<dbReference type="InterPro" id="IPR013088">
    <property type="entry name" value="Znf_NHR/GATA"/>
</dbReference>
<dbReference type="PANTHER" id="PTHR24083">
    <property type="entry name" value="NUCLEAR HORMONE RECEPTOR"/>
    <property type="match status" value="1"/>
</dbReference>
<dbReference type="Pfam" id="PF00104">
    <property type="entry name" value="Hormone_recep"/>
    <property type="match status" value="1"/>
</dbReference>
<dbReference type="Pfam" id="PF00105">
    <property type="entry name" value="zf-C4"/>
    <property type="match status" value="1"/>
</dbReference>
<dbReference type="PRINTS" id="PR01282">
    <property type="entry name" value="COUPTNFACTOR"/>
</dbReference>
<dbReference type="PRINTS" id="PR00398">
    <property type="entry name" value="STRDHORMONER"/>
</dbReference>
<dbReference type="PRINTS" id="PR00047">
    <property type="entry name" value="STROIDFINGER"/>
</dbReference>
<dbReference type="SMART" id="SM00430">
    <property type="entry name" value="HOLI"/>
    <property type="match status" value="1"/>
</dbReference>
<dbReference type="SMART" id="SM00399">
    <property type="entry name" value="ZnF_C4"/>
    <property type="match status" value="1"/>
</dbReference>
<dbReference type="SUPFAM" id="SSF57716">
    <property type="entry name" value="Glucocorticoid receptor-like (DNA-binding domain)"/>
    <property type="match status" value="1"/>
</dbReference>
<dbReference type="SUPFAM" id="SSF48508">
    <property type="entry name" value="Nuclear receptor ligand-binding domain"/>
    <property type="match status" value="1"/>
</dbReference>
<dbReference type="PROSITE" id="PS51843">
    <property type="entry name" value="NR_LBD"/>
    <property type="match status" value="1"/>
</dbReference>
<dbReference type="PROSITE" id="PS00031">
    <property type="entry name" value="NUCLEAR_REC_DBD_1"/>
    <property type="match status" value="1"/>
</dbReference>
<dbReference type="PROSITE" id="PS51030">
    <property type="entry name" value="NUCLEAR_REC_DBD_2"/>
    <property type="match status" value="1"/>
</dbReference>
<comment type="function">
    <text evidence="4 5">Receptor that is required in photoreceptors R1, R3, R4 and R6 during eye development; generation of the ganglion mother cell-2 (GMC-2) fate in the nb7-3 lineage, coinciding with the transition in the expression of HB to KR in the neuroblasts (NBs).</text>
</comment>
<comment type="subcellular location">
    <subcellularLocation>
        <location evidence="1">Nucleus</location>
    </subcellularLocation>
</comment>
<comment type="alternative products">
    <event type="alternative splicing"/>
    <isoform>
        <id>P16376-1</id>
        <name>A</name>
        <name>Type 2</name>
        <sequence type="displayed"/>
    </isoform>
    <isoform>
        <id>P16375-1</id>
        <name>B</name>
        <name>Type 1</name>
        <sequence type="external"/>
    </isoform>
    <isoform>
        <id>P16375-2</id>
        <name>C</name>
        <sequence type="external"/>
    </isoform>
</comment>
<comment type="tissue specificity">
    <text evidence="4 5">Expressed in several embryonic tissues; dorsal vessel, oenocyte and fat body. CNS expression is dynamic and confined to temporally restricted subsections of the NB lineage; expressed in many NB and GMCs, but only a small number of neurons.</text>
</comment>
<comment type="similarity">
    <text evidence="6">Belongs to the nuclear hormone receptor family. NR2 subfamily.</text>
</comment>
<accession>P16376</accession>
<accession>Q8INJ0</accession>
<reference key="1">
    <citation type="journal article" date="1990" name="Cell">
        <title>The Drosophila seven-up gene, a member of the steroid receptor gene superfamily, controls photoreceptor cell fates.</title>
        <authorList>
            <person name="Mlodzik M."/>
            <person name="Hiromi Y."/>
            <person name="Weber U."/>
            <person name="Goodman C.S."/>
            <person name="Rubin G.M."/>
        </authorList>
    </citation>
    <scope>NUCLEOTIDE SEQUENCE [MRNA]</scope>
    <scope>FUNCTION</scope>
    <scope>TISSUE SPECIFICITY</scope>
    <source>
        <tissue>Embryo</tissue>
    </source>
</reference>
<reference key="2">
    <citation type="journal article" date="2000" name="Science">
        <title>The genome sequence of Drosophila melanogaster.</title>
        <authorList>
            <person name="Adams M.D."/>
            <person name="Celniker S.E."/>
            <person name="Holt R.A."/>
            <person name="Evans C.A."/>
            <person name="Gocayne J.D."/>
            <person name="Amanatides P.G."/>
            <person name="Scherer S.E."/>
            <person name="Li P.W."/>
            <person name="Hoskins R.A."/>
            <person name="Galle R.F."/>
            <person name="George R.A."/>
            <person name="Lewis S.E."/>
            <person name="Richards S."/>
            <person name="Ashburner M."/>
            <person name="Henderson S.N."/>
            <person name="Sutton G.G."/>
            <person name="Wortman J.R."/>
            <person name="Yandell M.D."/>
            <person name="Zhang Q."/>
            <person name="Chen L.X."/>
            <person name="Brandon R.C."/>
            <person name="Rogers Y.-H.C."/>
            <person name="Blazej R.G."/>
            <person name="Champe M."/>
            <person name="Pfeiffer B.D."/>
            <person name="Wan K.H."/>
            <person name="Doyle C."/>
            <person name="Baxter E.G."/>
            <person name="Helt G."/>
            <person name="Nelson C.R."/>
            <person name="Miklos G.L.G."/>
            <person name="Abril J.F."/>
            <person name="Agbayani A."/>
            <person name="An H.-J."/>
            <person name="Andrews-Pfannkoch C."/>
            <person name="Baldwin D."/>
            <person name="Ballew R.M."/>
            <person name="Basu A."/>
            <person name="Baxendale J."/>
            <person name="Bayraktaroglu L."/>
            <person name="Beasley E.M."/>
            <person name="Beeson K.Y."/>
            <person name="Benos P.V."/>
            <person name="Berman B.P."/>
            <person name="Bhandari D."/>
            <person name="Bolshakov S."/>
            <person name="Borkova D."/>
            <person name="Botchan M.R."/>
            <person name="Bouck J."/>
            <person name="Brokstein P."/>
            <person name="Brottier P."/>
            <person name="Burtis K.C."/>
            <person name="Busam D.A."/>
            <person name="Butler H."/>
            <person name="Cadieu E."/>
            <person name="Center A."/>
            <person name="Chandra I."/>
            <person name="Cherry J.M."/>
            <person name="Cawley S."/>
            <person name="Dahlke C."/>
            <person name="Davenport L.B."/>
            <person name="Davies P."/>
            <person name="de Pablos B."/>
            <person name="Delcher A."/>
            <person name="Deng Z."/>
            <person name="Mays A.D."/>
            <person name="Dew I."/>
            <person name="Dietz S.M."/>
            <person name="Dodson K."/>
            <person name="Doup L.E."/>
            <person name="Downes M."/>
            <person name="Dugan-Rocha S."/>
            <person name="Dunkov B.C."/>
            <person name="Dunn P."/>
            <person name="Durbin K.J."/>
            <person name="Evangelista C.C."/>
            <person name="Ferraz C."/>
            <person name="Ferriera S."/>
            <person name="Fleischmann W."/>
            <person name="Fosler C."/>
            <person name="Gabrielian A.E."/>
            <person name="Garg N.S."/>
            <person name="Gelbart W.M."/>
            <person name="Glasser K."/>
            <person name="Glodek A."/>
            <person name="Gong F."/>
            <person name="Gorrell J.H."/>
            <person name="Gu Z."/>
            <person name="Guan P."/>
            <person name="Harris M."/>
            <person name="Harris N.L."/>
            <person name="Harvey D.A."/>
            <person name="Heiman T.J."/>
            <person name="Hernandez J.R."/>
            <person name="Houck J."/>
            <person name="Hostin D."/>
            <person name="Houston K.A."/>
            <person name="Howland T.J."/>
            <person name="Wei M.-H."/>
            <person name="Ibegwam C."/>
            <person name="Jalali M."/>
            <person name="Kalush F."/>
            <person name="Karpen G.H."/>
            <person name="Ke Z."/>
            <person name="Kennison J.A."/>
            <person name="Ketchum K.A."/>
            <person name="Kimmel B.E."/>
            <person name="Kodira C.D."/>
            <person name="Kraft C.L."/>
            <person name="Kravitz S."/>
            <person name="Kulp D."/>
            <person name="Lai Z."/>
            <person name="Lasko P."/>
            <person name="Lei Y."/>
            <person name="Levitsky A.A."/>
            <person name="Li J.H."/>
            <person name="Li Z."/>
            <person name="Liang Y."/>
            <person name="Lin X."/>
            <person name="Liu X."/>
            <person name="Mattei B."/>
            <person name="McIntosh T.C."/>
            <person name="McLeod M.P."/>
            <person name="McPherson D."/>
            <person name="Merkulov G."/>
            <person name="Milshina N.V."/>
            <person name="Mobarry C."/>
            <person name="Morris J."/>
            <person name="Moshrefi A."/>
            <person name="Mount S.M."/>
            <person name="Moy M."/>
            <person name="Murphy B."/>
            <person name="Murphy L."/>
            <person name="Muzny D.M."/>
            <person name="Nelson D.L."/>
            <person name="Nelson D.R."/>
            <person name="Nelson K.A."/>
            <person name="Nixon K."/>
            <person name="Nusskern D.R."/>
            <person name="Pacleb J.M."/>
            <person name="Palazzolo M."/>
            <person name="Pittman G.S."/>
            <person name="Pan S."/>
            <person name="Pollard J."/>
            <person name="Puri V."/>
            <person name="Reese M.G."/>
            <person name="Reinert K."/>
            <person name="Remington K."/>
            <person name="Saunders R.D.C."/>
            <person name="Scheeler F."/>
            <person name="Shen H."/>
            <person name="Shue B.C."/>
            <person name="Siden-Kiamos I."/>
            <person name="Simpson M."/>
            <person name="Skupski M.P."/>
            <person name="Smith T.J."/>
            <person name="Spier E."/>
            <person name="Spradling A.C."/>
            <person name="Stapleton M."/>
            <person name="Strong R."/>
            <person name="Sun E."/>
            <person name="Svirskas R."/>
            <person name="Tector C."/>
            <person name="Turner R."/>
            <person name="Venter E."/>
            <person name="Wang A.H."/>
            <person name="Wang X."/>
            <person name="Wang Z.-Y."/>
            <person name="Wassarman D.A."/>
            <person name="Weinstock G.M."/>
            <person name="Weissenbach J."/>
            <person name="Williams S.M."/>
            <person name="Woodage T."/>
            <person name="Worley K.C."/>
            <person name="Wu D."/>
            <person name="Yang S."/>
            <person name="Yao Q.A."/>
            <person name="Ye J."/>
            <person name="Yeh R.-F."/>
            <person name="Zaveri J.S."/>
            <person name="Zhan M."/>
            <person name="Zhang G."/>
            <person name="Zhao Q."/>
            <person name="Zheng L."/>
            <person name="Zheng X.H."/>
            <person name="Zhong F.N."/>
            <person name="Zhong W."/>
            <person name="Zhou X."/>
            <person name="Zhu S.C."/>
            <person name="Zhu X."/>
            <person name="Smith H.O."/>
            <person name="Gibbs R.A."/>
            <person name="Myers E.W."/>
            <person name="Rubin G.M."/>
            <person name="Venter J.C."/>
        </authorList>
    </citation>
    <scope>NUCLEOTIDE SEQUENCE [LARGE SCALE GENOMIC DNA]</scope>
    <source>
        <strain>Berkeley</strain>
    </source>
</reference>
<reference key="3">
    <citation type="journal article" date="2002" name="Genome Biol.">
        <title>Annotation of the Drosophila melanogaster euchromatic genome: a systematic review.</title>
        <authorList>
            <person name="Misra S."/>
            <person name="Crosby M.A."/>
            <person name="Mungall C.J."/>
            <person name="Matthews B.B."/>
            <person name="Campbell K.S."/>
            <person name="Hradecky P."/>
            <person name="Huang Y."/>
            <person name="Kaminker J.S."/>
            <person name="Millburn G.H."/>
            <person name="Prochnik S.E."/>
            <person name="Smith C.D."/>
            <person name="Tupy J.L."/>
            <person name="Whitfield E.J."/>
            <person name="Bayraktaroglu L."/>
            <person name="Berman B.P."/>
            <person name="Bettencourt B.R."/>
            <person name="Celniker S.E."/>
            <person name="de Grey A.D.N.J."/>
            <person name="Drysdale R.A."/>
            <person name="Harris N.L."/>
            <person name="Richter J."/>
            <person name="Russo S."/>
            <person name="Schroeder A.J."/>
            <person name="Shu S.Q."/>
            <person name="Stapleton M."/>
            <person name="Yamada C."/>
            <person name="Ashburner M."/>
            <person name="Gelbart W.M."/>
            <person name="Rubin G.M."/>
            <person name="Lewis S.E."/>
        </authorList>
    </citation>
    <scope>GENOME REANNOTATION</scope>
    <scope>ALTERNATIVE SPLICING</scope>
    <source>
        <strain>Berkeley</strain>
    </source>
</reference>
<reference key="4">
    <citation type="journal article" date="2005" name="Dev. Cell">
        <title>Seven-up controls switching of transcription factors that specify temporal identities of Drosophila neuroblasts.</title>
        <authorList>
            <person name="Kanai M.I."/>
            <person name="Okabe M."/>
            <person name="Hiromi Y."/>
        </authorList>
    </citation>
    <scope>FUNCTION</scope>
    <scope>TISSUE SPECIFICITY</scope>
</reference>
<proteinExistence type="evidence at transcript level"/>
<evidence type="ECO:0000255" key="1">
    <source>
        <dbReference type="PROSITE-ProRule" id="PRU00407"/>
    </source>
</evidence>
<evidence type="ECO:0000255" key="2">
    <source>
        <dbReference type="PROSITE-ProRule" id="PRU01189"/>
    </source>
</evidence>
<evidence type="ECO:0000256" key="3">
    <source>
        <dbReference type="SAM" id="MobiDB-lite"/>
    </source>
</evidence>
<evidence type="ECO:0000269" key="4">
    <source>
    </source>
</evidence>
<evidence type="ECO:0000269" key="5">
    <source>
    </source>
</evidence>
<evidence type="ECO:0000305" key="6"/>
<gene>
    <name type="primary">svp</name>
    <name type="synonym">NR2F3</name>
    <name type="ORF">CG11502</name>
</gene>
<protein>
    <recommendedName>
        <fullName>Steroid receptor seven-up, isoform A</fullName>
    </recommendedName>
    <alternativeName>
        <fullName>Nuclear receptor subfamily 2 group F member 3, isoform A</fullName>
    </alternativeName>
</protein>
<sequence>MCASPSTAPGFFNPRPQSGAELSAFDIGLSRSMGLGVPPHSAWHEPPASLGGHLHAASAGPGTTTGSVATGGGGTTPSSVASQQSAVIKQDLSCPSLNQAGSGHHPGIKEDLSSSLPSANGGSAGGHHSGSGSGSGSGVNPGHGSDMLPLIKGHGQDMLTSIKGQPTGCGSTTPSSQANSSHSQSSNSGSQIDSKQNIECVVCGDKSSGKHYGQFTCEGCKSFFKRSVRRNLTYSCRGSRNCPIDQHHRNQCQYCRLKKCLKMGMRREAVQRGRVPPTQPGLAGMHGQYQIANGDPMGIAGFNGHSYLSSYISLLLRAEPYPTSRYGQCMQPNNIMGIDNICELAARLLFSAVEWAKNIPFFPELQVTDQVALLRLVWSELFVLNASQCSMPLHVAPLLAAAGLHASPMAADRVVAFMDHIRIFQEQVEKLKALHVDSAEYSCLKAIVLFTTGKLLDILYKDVPALLTKVSALLGKGSTASNDDVLAVVRDHLDELNRQEQESQAQQQAPLHLAAFMNCVAGVEAAVQQAEQAQVPTSSASASVSAPLVPSAGSAFSSCQAKSAGSEMDLLASLYAQAQATPPSSGGGDASGHNNSSGLGASLPTQSQSGSSSRNLTASPLSTSLATAPAPASASAPAPVPTSSVAQVPVPAPVPVTSSASSSSLGGGAYQTPSAAAAAAAMFHYQTPPRAAFGSAFDMFHHSTPFGVGVGHAHALAHSSGSGSASFGSPSYRYSPYSLAGSRWQL</sequence>